<name>RNPA_THET8</name>
<accession>Q7X5K6</accession>
<accession>Q5SL48</accession>
<gene>
    <name evidence="1" type="primary">rnpA</name>
    <name type="ordered locus">TTHA0445</name>
</gene>
<evidence type="ECO:0000255" key="1">
    <source>
        <dbReference type="HAMAP-Rule" id="MF_00227"/>
    </source>
</evidence>
<evidence type="ECO:0000256" key="2">
    <source>
        <dbReference type="SAM" id="MobiDB-lite"/>
    </source>
</evidence>
<evidence type="ECO:0000269" key="3">
    <source>
    </source>
</evidence>
<evidence type="ECO:0000305" key="4"/>
<organism>
    <name type="scientific">Thermus thermophilus (strain ATCC 27634 / DSM 579 / HB8)</name>
    <dbReference type="NCBI Taxonomy" id="300852"/>
    <lineage>
        <taxon>Bacteria</taxon>
        <taxon>Thermotogati</taxon>
        <taxon>Deinococcota</taxon>
        <taxon>Deinococci</taxon>
        <taxon>Thermales</taxon>
        <taxon>Thermaceae</taxon>
        <taxon>Thermus</taxon>
    </lineage>
</organism>
<feature type="chain" id="PRO_0000198559" description="Ribonuclease P protein component">
    <location>
        <begin position="1"/>
        <end position="163"/>
    </location>
</feature>
<feature type="region of interest" description="Disordered" evidence="2">
    <location>
        <begin position="1"/>
        <end position="68"/>
    </location>
</feature>
<feature type="compositionally biased region" description="Polar residues" evidence="2">
    <location>
        <begin position="8"/>
        <end position="19"/>
    </location>
</feature>
<feature type="mutagenesis site" description="No effect on activity of the reconstituted enzyme." evidence="3">
    <location>
        <begin position="1"/>
        <end position="50"/>
    </location>
</feature>
<proteinExistence type="evidence at protein level"/>
<comment type="function">
    <text>RNaseP catalyzes the removal of the 5'-leader sequence from pre-tRNA to produce the mature 5'-terminus. It can also cleave other RNA substrates such as 4.5S RNA. The protein component plays an auxiliary but essential role in vivo by binding to the 5'-leader sequence and broadening the substrate specificity of the ribozyme.</text>
</comment>
<comment type="catalytic activity">
    <reaction evidence="1">
        <text>Endonucleolytic cleavage of RNA, removing 5'-extranucleotides from tRNA precursor.</text>
        <dbReference type="EC" id="3.1.26.5"/>
    </reaction>
</comment>
<comment type="subunit">
    <text>Consists of a catalytic RNA component (M1 or rnpB) and a protein subunit.</text>
</comment>
<comment type="miscellaneous">
    <text>The open reading frame (ORF) for this protein entirely encompasses the ORF for the 50S ribosomal protein L34 (rpmH). The two start codons are separated by four nucleotides.</text>
</comment>
<comment type="similarity">
    <text evidence="1">Belongs to the RnpA family.</text>
</comment>
<comment type="sequence caution" evidence="4">
    <conflict type="erroneous initiation">
        <sequence resource="EMBL-CDS" id="BAD70268"/>
    </conflict>
</comment>
<keyword id="KW-0903">Direct protein sequencing</keyword>
<keyword id="KW-0255">Endonuclease</keyword>
<keyword id="KW-0378">Hydrolase</keyword>
<keyword id="KW-0540">Nuclease</keyword>
<keyword id="KW-1185">Reference proteome</keyword>
<keyword id="KW-0694">RNA-binding</keyword>
<keyword id="KW-0819">tRNA processing</keyword>
<reference key="1">
    <citation type="journal article" date="2003" name="Proc. Natl. Acad. Sci. U.S.A.">
        <title>An unusual mechanism of bacterial gene expression revealed for the RNase P protein of Thermus strains.</title>
        <authorList>
            <person name="Feltens R."/>
            <person name="Gossringer M."/>
            <person name="Willkomm D.K."/>
            <person name="Urlaub H."/>
            <person name="Hartmann R.K."/>
        </authorList>
    </citation>
    <scope>NUCLEOTIDE SEQUENCE [GENOMIC DNA]</scope>
    <scope>PROTEIN SEQUENCE OF 1-61; 89-96; 125-154 AND 158-163</scope>
    <scope>CHARACTERIZATION</scope>
    <scope>MUTAGENESIS</scope>
</reference>
<reference key="2">
    <citation type="submission" date="2004-11" db="EMBL/GenBank/DDBJ databases">
        <title>Complete genome sequence of Thermus thermophilus HB8.</title>
        <authorList>
            <person name="Masui R."/>
            <person name="Kurokawa K."/>
            <person name="Nakagawa N."/>
            <person name="Tokunaga F."/>
            <person name="Koyama Y."/>
            <person name="Shibata T."/>
            <person name="Oshima T."/>
            <person name="Yokoyama S."/>
            <person name="Yasunaga T."/>
            <person name="Kuramitsu S."/>
        </authorList>
    </citation>
    <scope>NUCLEOTIDE SEQUENCE [LARGE SCALE GENOMIC DNA]</scope>
    <source>
        <strain>ATCC 27634 / DSM 579 / HB8</strain>
    </source>
</reference>
<protein>
    <recommendedName>
        <fullName evidence="1">Ribonuclease P protein component</fullName>
        <shortName evidence="1">RNase P protein</shortName>
        <shortName evidence="1">RNaseP protein</shortName>
        <ecNumber evidence="1">3.1.26.5</ecNumber>
    </recommendedName>
    <alternativeName>
        <fullName evidence="1">Protein C5</fullName>
    </alternativeName>
</protein>
<sequence length="163" mass="17851">MDEKDVATQPQETGQNPRLSGQDEDPGRPEGAEAPPSEGALAPHARRSEAVGPKPPAPGGKLLSLKGDRAFQRLRKGRAGRGRYVSVKWLPAAELRVGIVVSKKVGKAVVRNKVKRRLREILRRLHLPQAHLLVVASPEAREADFAELFRDVVRALRKSGLVQ</sequence>
<dbReference type="EC" id="3.1.26.5" evidence="1"/>
<dbReference type="EMBL" id="AY256342">
    <property type="protein sequence ID" value="AAO88977.1"/>
    <property type="molecule type" value="Genomic_DNA"/>
</dbReference>
<dbReference type="EMBL" id="AP008226">
    <property type="protein sequence ID" value="BAD70268.1"/>
    <property type="status" value="ALT_INIT"/>
    <property type="molecule type" value="Genomic_DNA"/>
</dbReference>
<dbReference type="RefSeq" id="YP_143711.1">
    <property type="nucleotide sequence ID" value="NC_006461.1"/>
</dbReference>
<dbReference type="SMR" id="Q7X5K6"/>
<dbReference type="EnsemblBacteria" id="BAD70268">
    <property type="protein sequence ID" value="BAD70268"/>
    <property type="gene ID" value="BAD70268"/>
</dbReference>
<dbReference type="KEGG" id="ttj:TTHA0445"/>
<dbReference type="PATRIC" id="fig|300852.9.peg.444"/>
<dbReference type="eggNOG" id="COG0594">
    <property type="taxonomic scope" value="Bacteria"/>
</dbReference>
<dbReference type="HOGENOM" id="CLU_117179_4_2_0"/>
<dbReference type="Proteomes" id="UP000000532">
    <property type="component" value="Chromosome"/>
</dbReference>
<dbReference type="GO" id="GO:0030677">
    <property type="term" value="C:ribonuclease P complex"/>
    <property type="evidence" value="ECO:0007669"/>
    <property type="project" value="TreeGrafter"/>
</dbReference>
<dbReference type="GO" id="GO:0042781">
    <property type="term" value="F:3'-tRNA processing endoribonuclease activity"/>
    <property type="evidence" value="ECO:0007669"/>
    <property type="project" value="TreeGrafter"/>
</dbReference>
<dbReference type="GO" id="GO:0004526">
    <property type="term" value="F:ribonuclease P activity"/>
    <property type="evidence" value="ECO:0007669"/>
    <property type="project" value="UniProtKB-UniRule"/>
</dbReference>
<dbReference type="GO" id="GO:0000049">
    <property type="term" value="F:tRNA binding"/>
    <property type="evidence" value="ECO:0007669"/>
    <property type="project" value="UniProtKB-UniRule"/>
</dbReference>
<dbReference type="GO" id="GO:0001682">
    <property type="term" value="P:tRNA 5'-leader removal"/>
    <property type="evidence" value="ECO:0007669"/>
    <property type="project" value="UniProtKB-UniRule"/>
</dbReference>
<dbReference type="Gene3D" id="3.30.230.10">
    <property type="match status" value="1"/>
</dbReference>
<dbReference type="HAMAP" id="MF_00227">
    <property type="entry name" value="RNase_P"/>
    <property type="match status" value="1"/>
</dbReference>
<dbReference type="InterPro" id="IPR020568">
    <property type="entry name" value="Ribosomal_Su5_D2-typ_SF"/>
</dbReference>
<dbReference type="InterPro" id="IPR014721">
    <property type="entry name" value="Ribsml_uS5_D2-typ_fold_subgr"/>
</dbReference>
<dbReference type="InterPro" id="IPR000100">
    <property type="entry name" value="RNase_P"/>
</dbReference>
<dbReference type="InterPro" id="IPR020539">
    <property type="entry name" value="RNase_P_CS"/>
</dbReference>
<dbReference type="NCBIfam" id="TIGR00188">
    <property type="entry name" value="rnpA"/>
    <property type="match status" value="1"/>
</dbReference>
<dbReference type="PANTHER" id="PTHR33992">
    <property type="entry name" value="RIBONUCLEASE P PROTEIN COMPONENT"/>
    <property type="match status" value="1"/>
</dbReference>
<dbReference type="PANTHER" id="PTHR33992:SF1">
    <property type="entry name" value="RIBONUCLEASE P PROTEIN COMPONENT"/>
    <property type="match status" value="1"/>
</dbReference>
<dbReference type="Pfam" id="PF00825">
    <property type="entry name" value="Ribonuclease_P"/>
    <property type="match status" value="1"/>
</dbReference>
<dbReference type="SUPFAM" id="SSF54211">
    <property type="entry name" value="Ribosomal protein S5 domain 2-like"/>
    <property type="match status" value="1"/>
</dbReference>
<dbReference type="PROSITE" id="PS00648">
    <property type="entry name" value="RIBONUCLEASE_P"/>
    <property type="match status" value="1"/>
</dbReference>